<evidence type="ECO:0000250" key="1">
    <source>
        <dbReference type="UniProtKB" id="Q57038"/>
    </source>
</evidence>
<evidence type="ECO:0000255" key="2">
    <source>
        <dbReference type="PROSITE-ProRule" id="PRU00968"/>
    </source>
</evidence>
<evidence type="ECO:0000305" key="3"/>
<evidence type="ECO:0000305" key="4">
    <source>
    </source>
</evidence>
<organism>
    <name type="scientific">Geobacillus thermodenitrificans</name>
    <dbReference type="NCBI Taxonomy" id="33940"/>
    <lineage>
        <taxon>Bacteria</taxon>
        <taxon>Bacillati</taxon>
        <taxon>Bacillota</taxon>
        <taxon>Bacilli</taxon>
        <taxon>Bacillales</taxon>
        <taxon>Anoxybacillaceae</taxon>
        <taxon>Geobacillus</taxon>
    </lineage>
</organism>
<feature type="chain" id="PRO_0000061919" description="Menaquinol:cytochrome c reductase cytochrome b subunit">
    <location>
        <begin position="1"/>
        <end position="224"/>
    </location>
</feature>
<feature type="transmembrane region" description="Helical" evidence="2">
    <location>
        <begin position="37"/>
        <end position="57"/>
    </location>
</feature>
<feature type="transmembrane region" description="Helical" evidence="2">
    <location>
        <begin position="96"/>
        <end position="116"/>
    </location>
</feature>
<feature type="transmembrane region" description="Helical" evidence="2">
    <location>
        <begin position="126"/>
        <end position="146"/>
    </location>
</feature>
<feature type="transmembrane region" description="Helical" evidence="2">
    <location>
        <begin position="195"/>
        <end position="215"/>
    </location>
</feature>
<feature type="binding site" evidence="1">
    <location>
        <position position="42"/>
    </location>
    <ligand>
        <name>heme b</name>
        <dbReference type="ChEBI" id="CHEBI:60344"/>
        <label>1</label>
    </ligand>
</feature>
<feature type="binding site" description="covalent" evidence="1">
    <location>
        <position position="43"/>
    </location>
    <ligand>
        <name>heme c</name>
        <dbReference type="ChEBI" id="CHEBI:61717"/>
    </ligand>
</feature>
<feature type="binding site" evidence="1">
    <location>
        <position position="91"/>
    </location>
    <ligand>
        <name>heme b</name>
        <dbReference type="ChEBI" id="CHEBI:60344"/>
        <label>2</label>
    </ligand>
</feature>
<feature type="binding site" description="axial binding residue" evidence="1">
    <location>
        <position position="94"/>
    </location>
    <ligand>
        <name>heme b</name>
        <dbReference type="ChEBI" id="CHEBI:60344"/>
        <label>2</label>
    </ligand>
    <ligandPart>
        <name>Fe</name>
        <dbReference type="ChEBI" id="CHEBI:18248"/>
    </ligandPart>
</feature>
<feature type="binding site" description="axial binding residue" evidence="1">
    <location>
        <position position="108"/>
    </location>
    <ligand>
        <name>heme b</name>
        <dbReference type="ChEBI" id="CHEBI:60344"/>
        <label>1</label>
    </ligand>
    <ligandPart>
        <name>Fe</name>
        <dbReference type="ChEBI" id="CHEBI:18248"/>
    </ligandPart>
</feature>
<feature type="binding site" evidence="1">
    <location>
        <position position="111"/>
    </location>
    <ligand>
        <name>heme b</name>
        <dbReference type="ChEBI" id="CHEBI:60344"/>
        <label>1</label>
    </ligand>
</feature>
<feature type="binding site" description="axial binding residue" evidence="1">
    <location>
        <position position="196"/>
    </location>
    <ligand>
        <name>heme b</name>
        <dbReference type="ChEBI" id="CHEBI:60344"/>
        <label>2</label>
    </ligand>
    <ligandPart>
        <name>Fe</name>
        <dbReference type="ChEBI" id="CHEBI:18248"/>
    </ligandPart>
</feature>
<feature type="binding site" description="axial binding residue" evidence="1">
    <location>
        <position position="211"/>
    </location>
    <ligand>
        <name>heme b</name>
        <dbReference type="ChEBI" id="CHEBI:60344"/>
        <label>1</label>
    </ligand>
    <ligandPart>
        <name>Fe</name>
        <dbReference type="ChEBI" id="CHEBI:18248"/>
    </ligandPart>
</feature>
<feature type="binding site" evidence="1">
    <location>
        <position position="216"/>
    </location>
    <ligand>
        <name>heme c</name>
        <dbReference type="ChEBI" id="CHEBI:61717"/>
    </ligand>
</feature>
<feature type="binding site" evidence="1">
    <location>
        <position position="220"/>
    </location>
    <ligand>
        <name>heme c</name>
        <dbReference type="ChEBI" id="CHEBI:61717"/>
    </ligand>
</feature>
<feature type="binding site" evidence="1">
    <location>
        <position position="221"/>
    </location>
    <ligand>
        <name>heme b</name>
        <dbReference type="ChEBI" id="CHEBI:60344"/>
        <label>1</label>
    </ligand>
</feature>
<accession>Q45658</accession>
<reference key="1">
    <citation type="journal article" date="1996" name="J. Biol. Chem.">
        <title>Bacillus stearothermophilus qcr operon encoding Rieske FeS protein, cytochrome b6, and a novel-type cytochrome c1 of quinol-cytochrome c reductase.</title>
        <authorList>
            <person name="Sone N."/>
            <person name="Tsuchiya N."/>
            <person name="Inoue M."/>
            <person name="Noguchi S."/>
        </authorList>
    </citation>
    <scope>NUCLEOTIDE SEQUENCE [GENOMIC DNA]</scope>
    <scope>FUNCTION</scope>
    <scope>SUBUNIT</scope>
    <source>
        <strain>K1041</strain>
    </source>
</reference>
<gene>
    <name type="primary">qcrB</name>
</gene>
<protein>
    <recommendedName>
        <fullName>Menaquinol:cytochrome c reductase cytochrome b subunit</fullName>
    </recommendedName>
</protein>
<comment type="function">
    <text evidence="4">Component of the menaquinol:cytochrome c reductase complex.</text>
</comment>
<comment type="cofactor">
    <cofactor evidence="1">
        <name>heme b</name>
        <dbReference type="ChEBI" id="CHEBI:60344"/>
    </cofactor>
    <text evidence="1">Binds 2 heme b groups non-covalently with two histidine residues as axial ligands.</text>
</comment>
<comment type="cofactor">
    <cofactor evidence="1">
        <name>heme c</name>
        <dbReference type="ChEBI" id="CHEBI:61717"/>
    </cofactor>
    <text evidence="1">Binds one heme group covalently by a single cysteine link with no axial amino acid ligand.</text>
</comment>
<comment type="subunit">
    <text evidence="4">The main subunits of the menaquinol:cytochrome c complex are a Rieske-type iron-sulfur protein (QcrA), a cytochrome b (QcrB) and a cytochrome c (QcrC).</text>
</comment>
<comment type="subcellular location">
    <subcellularLocation>
        <location evidence="3">Cell membrane</location>
        <topology evidence="3">Multi-pass membrane protein</topology>
    </subcellularLocation>
</comment>
<comment type="similarity">
    <text evidence="2">Belongs to the cytochrome b family.</text>
</comment>
<sequence>MLNKLYDWVDERLDITPLWRDIADHEVPEHVNPAHHFSAFVYCFGGLTFFVTVIQILSGMFLTMYYVPDIKNAWESVYYLQNEVAFGQIVRGMHHWGASLVIVMMFLHTLRVFFQGAYKKPREMNWIVGVLIFMVMMGLGFTGYLLPWDMKALFATKVGLQIAEAVPLIGPAIKTLLAGDPEIVGAQTLARFFAIHVFFLPAALLGLMAAHFLMIRRQGISGPL</sequence>
<proteinExistence type="evidence at protein level"/>
<dbReference type="EMBL" id="D83789">
    <property type="protein sequence ID" value="BAA12117.1"/>
    <property type="molecule type" value="Genomic_DNA"/>
</dbReference>
<dbReference type="RefSeq" id="WP_008879599.1">
    <property type="nucleotide sequence ID" value="NZ_PJQR01000003.1"/>
</dbReference>
<dbReference type="SMR" id="Q45658"/>
<dbReference type="STRING" id="33940.GTHT12_01703"/>
<dbReference type="GeneID" id="87623775"/>
<dbReference type="OMA" id="WDQLAIW"/>
<dbReference type="GO" id="GO:0005886">
    <property type="term" value="C:plasma membrane"/>
    <property type="evidence" value="ECO:0007669"/>
    <property type="project" value="UniProtKB-SubCell"/>
</dbReference>
<dbReference type="GO" id="GO:0009055">
    <property type="term" value="F:electron transfer activity"/>
    <property type="evidence" value="ECO:0007669"/>
    <property type="project" value="InterPro"/>
</dbReference>
<dbReference type="GO" id="GO:0046872">
    <property type="term" value="F:metal ion binding"/>
    <property type="evidence" value="ECO:0007669"/>
    <property type="project" value="UniProtKB-KW"/>
</dbReference>
<dbReference type="GO" id="GO:0016491">
    <property type="term" value="F:oxidoreductase activity"/>
    <property type="evidence" value="ECO:0007669"/>
    <property type="project" value="InterPro"/>
</dbReference>
<dbReference type="GO" id="GO:0022904">
    <property type="term" value="P:respiratory electron transport chain"/>
    <property type="evidence" value="ECO:0007669"/>
    <property type="project" value="InterPro"/>
</dbReference>
<dbReference type="CDD" id="cd00284">
    <property type="entry name" value="Cytochrome_b_N"/>
    <property type="match status" value="1"/>
</dbReference>
<dbReference type="FunFam" id="1.20.810.10:FF:000003">
    <property type="entry name" value="Menaquinol-Cytochrome c reductase cytochrome b6 subunit"/>
    <property type="match status" value="1"/>
</dbReference>
<dbReference type="Gene3D" id="1.20.810.10">
    <property type="entry name" value="Cytochrome Bc1 Complex, Chain C"/>
    <property type="match status" value="1"/>
</dbReference>
<dbReference type="InterPro" id="IPR005797">
    <property type="entry name" value="Cyt_b/b6_N"/>
</dbReference>
<dbReference type="InterPro" id="IPR027387">
    <property type="entry name" value="Cytb/b6-like_sf"/>
</dbReference>
<dbReference type="InterPro" id="IPR048259">
    <property type="entry name" value="Cytochrome_b_N_euk/bac"/>
</dbReference>
<dbReference type="InterPro" id="IPR016174">
    <property type="entry name" value="Di-haem_cyt_TM"/>
</dbReference>
<dbReference type="NCBIfam" id="NF040969">
    <property type="entry name" value="cytb_ExtP"/>
    <property type="match status" value="1"/>
</dbReference>
<dbReference type="NCBIfam" id="NF002990">
    <property type="entry name" value="PRK03735.1"/>
    <property type="match status" value="1"/>
</dbReference>
<dbReference type="PANTHER" id="PTHR19271">
    <property type="entry name" value="CYTOCHROME B"/>
    <property type="match status" value="1"/>
</dbReference>
<dbReference type="PANTHER" id="PTHR19271:SF16">
    <property type="entry name" value="CYTOCHROME B"/>
    <property type="match status" value="1"/>
</dbReference>
<dbReference type="Pfam" id="PF00033">
    <property type="entry name" value="Cytochrome_B"/>
    <property type="match status" value="1"/>
</dbReference>
<dbReference type="PIRSF" id="PIRSF000032">
    <property type="entry name" value="Cytochrome_b6"/>
    <property type="match status" value="1"/>
</dbReference>
<dbReference type="SUPFAM" id="SSF81342">
    <property type="entry name" value="Transmembrane di-heme cytochromes"/>
    <property type="match status" value="1"/>
</dbReference>
<dbReference type="PROSITE" id="PS51002">
    <property type="entry name" value="CYTB_NTER"/>
    <property type="match status" value="1"/>
</dbReference>
<name>QCRB_GEOTD</name>
<keyword id="KW-1003">Cell membrane</keyword>
<keyword id="KW-0249">Electron transport</keyword>
<keyword id="KW-0349">Heme</keyword>
<keyword id="KW-0408">Iron</keyword>
<keyword id="KW-0472">Membrane</keyword>
<keyword id="KW-0479">Metal-binding</keyword>
<keyword id="KW-0812">Transmembrane</keyword>
<keyword id="KW-1133">Transmembrane helix</keyword>
<keyword id="KW-0813">Transport</keyword>